<protein>
    <recommendedName>
        <fullName>Probable linoleate 9S-lipoxygenase 7</fullName>
        <ecNumber>1.13.11.58</ecNumber>
    </recommendedName>
</protein>
<gene>
    <name type="primary">LOX1.7</name>
    <name type="synonym">PLOX1</name>
</gene>
<proteinExistence type="evidence at transcript level"/>
<feature type="chain" id="PRO_0000412925" description="Probable linoleate 9S-lipoxygenase 7">
    <location>
        <begin position="1"/>
        <end position="861"/>
    </location>
</feature>
<feature type="domain" description="PLAT" evidence="2">
    <location>
        <begin position="29"/>
        <end position="160"/>
    </location>
</feature>
<feature type="domain" description="Lipoxygenase" evidence="3">
    <location>
        <begin position="163"/>
        <end position="861"/>
    </location>
</feature>
<feature type="region of interest" description="Disordered" evidence="4">
    <location>
        <begin position="220"/>
        <end position="246"/>
    </location>
</feature>
<feature type="binding site" evidence="3">
    <location>
        <position position="522"/>
    </location>
    <ligand>
        <name>Fe cation</name>
        <dbReference type="ChEBI" id="CHEBI:24875"/>
        <note>catalytic</note>
    </ligand>
</feature>
<feature type="binding site" evidence="3">
    <location>
        <position position="527"/>
    </location>
    <ligand>
        <name>Fe cation</name>
        <dbReference type="ChEBI" id="CHEBI:24875"/>
        <note>catalytic</note>
    </ligand>
</feature>
<feature type="binding site" evidence="3">
    <location>
        <position position="713"/>
    </location>
    <ligand>
        <name>Fe cation</name>
        <dbReference type="ChEBI" id="CHEBI:24875"/>
        <note>catalytic</note>
    </ligand>
</feature>
<feature type="binding site" evidence="3">
    <location>
        <position position="717"/>
    </location>
    <ligand>
        <name>Fe cation</name>
        <dbReference type="ChEBI" id="CHEBI:24875"/>
        <note>catalytic</note>
    </ligand>
</feature>
<feature type="binding site" evidence="3">
    <location>
        <position position="861"/>
    </location>
    <ligand>
        <name>Fe cation</name>
        <dbReference type="ChEBI" id="CHEBI:24875"/>
        <note>catalytic</note>
    </ligand>
</feature>
<evidence type="ECO:0000250" key="1"/>
<evidence type="ECO:0000255" key="2">
    <source>
        <dbReference type="PROSITE-ProRule" id="PRU00152"/>
    </source>
</evidence>
<evidence type="ECO:0000255" key="3">
    <source>
        <dbReference type="PROSITE-ProRule" id="PRU00726"/>
    </source>
</evidence>
<evidence type="ECO:0000256" key="4">
    <source>
        <dbReference type="SAM" id="MobiDB-lite"/>
    </source>
</evidence>
<evidence type="ECO:0000269" key="5">
    <source ref="1"/>
</evidence>
<evidence type="ECO:0000305" key="6"/>
<name>LOX17_SOLTU</name>
<dbReference type="EC" id="1.13.11.58"/>
<dbReference type="EMBL" id="AF019613">
    <property type="protein sequence ID" value="AAB81594.1"/>
    <property type="molecule type" value="mRNA"/>
</dbReference>
<dbReference type="SMR" id="O22507"/>
<dbReference type="FunCoup" id="O22507">
    <property type="interactions" value="87"/>
</dbReference>
<dbReference type="STRING" id="4113.O22507"/>
<dbReference type="InParanoid" id="O22507"/>
<dbReference type="UniPathway" id="UPA00382"/>
<dbReference type="Proteomes" id="UP000011115">
    <property type="component" value="Unassembled WGS sequence"/>
</dbReference>
<dbReference type="ExpressionAtlas" id="O22507">
    <property type="expression patterns" value="baseline and differential"/>
</dbReference>
<dbReference type="GO" id="GO:0005737">
    <property type="term" value="C:cytoplasm"/>
    <property type="evidence" value="ECO:0007669"/>
    <property type="project" value="UniProtKB-SubCell"/>
</dbReference>
<dbReference type="GO" id="GO:1990136">
    <property type="term" value="F:linoleate 9S-lipoxygenase activity"/>
    <property type="evidence" value="ECO:0007669"/>
    <property type="project" value="UniProtKB-EC"/>
</dbReference>
<dbReference type="GO" id="GO:0046872">
    <property type="term" value="F:metal ion binding"/>
    <property type="evidence" value="ECO:0007669"/>
    <property type="project" value="UniProtKB-KW"/>
</dbReference>
<dbReference type="GO" id="GO:0016702">
    <property type="term" value="F:oxidoreductase activity, acting on single donors with incorporation of molecular oxygen, incorporation of two atoms of oxygen"/>
    <property type="evidence" value="ECO:0000318"/>
    <property type="project" value="GO_Central"/>
</dbReference>
<dbReference type="GO" id="GO:0006633">
    <property type="term" value="P:fatty acid biosynthetic process"/>
    <property type="evidence" value="ECO:0007669"/>
    <property type="project" value="UniProtKB-KW"/>
</dbReference>
<dbReference type="GO" id="GO:0034440">
    <property type="term" value="P:lipid oxidation"/>
    <property type="evidence" value="ECO:0000318"/>
    <property type="project" value="GO_Central"/>
</dbReference>
<dbReference type="GO" id="GO:0031408">
    <property type="term" value="P:oxylipin biosynthetic process"/>
    <property type="evidence" value="ECO:0007669"/>
    <property type="project" value="UniProtKB-UniPathway"/>
</dbReference>
<dbReference type="CDD" id="cd01751">
    <property type="entry name" value="PLAT_LH2"/>
    <property type="match status" value="1"/>
</dbReference>
<dbReference type="FunFam" id="1.20.245.10:FF:000002">
    <property type="entry name" value="Lipoxygenase"/>
    <property type="match status" value="1"/>
</dbReference>
<dbReference type="FunFam" id="2.60.60.20:FF:000015">
    <property type="entry name" value="Lipoxygenase"/>
    <property type="match status" value="1"/>
</dbReference>
<dbReference type="FunFam" id="3.10.450.60:FF:000002">
    <property type="entry name" value="Lipoxygenase"/>
    <property type="match status" value="1"/>
</dbReference>
<dbReference type="FunFam" id="4.10.372.10:FF:000001">
    <property type="entry name" value="Lipoxygenase"/>
    <property type="match status" value="1"/>
</dbReference>
<dbReference type="FunFam" id="4.10.375.10:FF:000001">
    <property type="entry name" value="Lipoxygenase"/>
    <property type="match status" value="1"/>
</dbReference>
<dbReference type="Gene3D" id="3.10.450.60">
    <property type="match status" value="1"/>
</dbReference>
<dbReference type="Gene3D" id="4.10.375.10">
    <property type="entry name" value="Lipoxygenase-1, Domain 2"/>
    <property type="match status" value="1"/>
</dbReference>
<dbReference type="Gene3D" id="4.10.372.10">
    <property type="entry name" value="Lipoxygenase-1, Domain 3"/>
    <property type="match status" value="1"/>
</dbReference>
<dbReference type="Gene3D" id="1.20.245.10">
    <property type="entry name" value="Lipoxygenase-1, Domain 5"/>
    <property type="match status" value="1"/>
</dbReference>
<dbReference type="Gene3D" id="2.60.60.20">
    <property type="entry name" value="PLAT/LH2 domain"/>
    <property type="match status" value="1"/>
</dbReference>
<dbReference type="InterPro" id="IPR000907">
    <property type="entry name" value="LipOase"/>
</dbReference>
<dbReference type="InterPro" id="IPR013819">
    <property type="entry name" value="LipOase_C"/>
</dbReference>
<dbReference type="InterPro" id="IPR036226">
    <property type="entry name" value="LipOase_C_sf"/>
</dbReference>
<dbReference type="InterPro" id="IPR020834">
    <property type="entry name" value="LipOase_CS"/>
</dbReference>
<dbReference type="InterPro" id="IPR020833">
    <property type="entry name" value="LipOase_Fe_BS"/>
</dbReference>
<dbReference type="InterPro" id="IPR001246">
    <property type="entry name" value="LipOase_plant"/>
</dbReference>
<dbReference type="InterPro" id="IPR042057">
    <property type="entry name" value="Lipoxy_PLAT/LH2"/>
</dbReference>
<dbReference type="InterPro" id="IPR027433">
    <property type="entry name" value="Lipoxygenase_dom_3"/>
</dbReference>
<dbReference type="InterPro" id="IPR001024">
    <property type="entry name" value="PLAT/LH2_dom"/>
</dbReference>
<dbReference type="InterPro" id="IPR036392">
    <property type="entry name" value="PLAT/LH2_dom_sf"/>
</dbReference>
<dbReference type="PANTHER" id="PTHR11771">
    <property type="entry name" value="LIPOXYGENASE"/>
    <property type="match status" value="1"/>
</dbReference>
<dbReference type="Pfam" id="PF00305">
    <property type="entry name" value="Lipoxygenase"/>
    <property type="match status" value="1"/>
</dbReference>
<dbReference type="Pfam" id="PF01477">
    <property type="entry name" value="PLAT"/>
    <property type="match status" value="1"/>
</dbReference>
<dbReference type="PRINTS" id="PR00087">
    <property type="entry name" value="LIPOXYGENASE"/>
</dbReference>
<dbReference type="PRINTS" id="PR00468">
    <property type="entry name" value="PLTLPOXGNASE"/>
</dbReference>
<dbReference type="SMART" id="SM00308">
    <property type="entry name" value="LH2"/>
    <property type="match status" value="1"/>
</dbReference>
<dbReference type="SUPFAM" id="SSF49723">
    <property type="entry name" value="Lipase/lipooxygenase domain (PLAT/LH2 domain)"/>
    <property type="match status" value="1"/>
</dbReference>
<dbReference type="SUPFAM" id="SSF48484">
    <property type="entry name" value="Lipoxigenase"/>
    <property type="match status" value="1"/>
</dbReference>
<dbReference type="PROSITE" id="PS00711">
    <property type="entry name" value="LIPOXYGENASE_1"/>
    <property type="match status" value="1"/>
</dbReference>
<dbReference type="PROSITE" id="PS00081">
    <property type="entry name" value="LIPOXYGENASE_2"/>
    <property type="match status" value="1"/>
</dbReference>
<dbReference type="PROSITE" id="PS51393">
    <property type="entry name" value="LIPOXYGENASE_3"/>
    <property type="match status" value="1"/>
</dbReference>
<dbReference type="PROSITE" id="PS50095">
    <property type="entry name" value="PLAT"/>
    <property type="match status" value="1"/>
</dbReference>
<accession>O22507</accession>
<keyword id="KW-0963">Cytoplasm</keyword>
<keyword id="KW-0223">Dioxygenase</keyword>
<keyword id="KW-0275">Fatty acid biosynthesis</keyword>
<keyword id="KW-0276">Fatty acid metabolism</keyword>
<keyword id="KW-0408">Iron</keyword>
<keyword id="KW-0444">Lipid biosynthesis</keyword>
<keyword id="KW-0443">Lipid metabolism</keyword>
<keyword id="KW-0479">Metal-binding</keyword>
<keyword id="KW-0560">Oxidoreductase</keyword>
<keyword id="KW-0925">Oxylipin biosynthesis</keyword>
<keyword id="KW-1185">Reference proteome</keyword>
<reference key="1">
    <citation type="journal article" date="1998" name="Physiol. Plantarum">
        <title>Characterization of potato tuber lipoxygenase cDNAs and lipoxygenase expression in potato tubers and leaves.</title>
        <authorList>
            <person name="Fidantsef A.L."/>
            <person name="Bostock R.M."/>
        </authorList>
    </citation>
    <scope>NUCLEOTIDE SEQUENCE [MRNA]</scope>
    <scope>TISSUE SPECIFICITY</scope>
    <scope>INDUCTION BY PATHOGEN; JASMONATE AND ARACHIDONATE</scope>
    <source>
        <strain>cv. Lemhi Russet</strain>
        <tissue>Tuber</tissue>
    </source>
</reference>
<sequence length="861" mass="97065">MIGQITSGLFGGHDDSKKVKGTVVMMNKNVLDFTDLAGSLTGKIFDVLGQKVSFQLISSVQGDPTNGLQGKHSNPAYLENSLFTLTPLTAGSETAFGVTFDWNEEFGVPGAFIIKNMHINEFFLKSLTLEDVPNHGKVHFVCNSWVYPSLNYKSDRIFFANQPYLPSETPELLRKYRENELLTLRGDGTGKREAWDRIYDYDIYNDLGNPDQGKENVRTTLGGSAEYPYPRRGRTGRPPTRTDPKSESRIPLILSLDIYVPRDERFGHLKMSDFLTYALKSIVQFILPELHALFDGTPNEFDSFEDVLRLYEGRDQLPQGPLFKALTAAIPLEMIRELLRTDGEGILRFPTPLVIKDSKTAWRTDEEFAREMLAGVNPIIISRLQEFPPKSKLDPEAYGNQNSTITAEHIEDKLDGLTVDEAMNNNKLFILNHHDVIIPYLRRINTTITKTYASRTLLFLQDNGSLKPLAIELSLPHPDGDQFGVTSKVYTPSDQGVESSIWQLAKAYVAVNDTGVHQLISHWLNTHAVIEPFVIATNRQLSVLHPIHKLLYPHFRDTMNINASARQILVNAGGVLESTVFQSKFAMEMSAVVYKDWVFPDQALPADLVKRGVAVEDSSSPHGVRLLIEDYPYAVDGLEIWSAIKSWVTDYCSFYYGSDEEILKDNELQAWWKELREVGHGDKKNEPWWPEMKTPQELIDSCTTIIWIASALHAAVNFGQYPYAGYLPNRPTVSRRFMPEPGTPDYEELKRNPDKAFLKTITAQLQTLLGVSLVEILSRHTTDEIYLGQRESPEWTKDKEPLAAFDRFGKKLTDIEKQIIQRNGDNILTNRSGPVNAPYTLLFPTSEGGLTGKGIPNSVSI</sequence>
<comment type="function">
    <text evidence="3">Plant lipoxygenases may be involved in a number of diverse aspects of plant physiology including growth and development, pest resistance, and senescence or responses to wounding. Catalyzes the hydroperoxidation of lipids containing a cis,cis-1,4-pentadiene structure.</text>
</comment>
<comment type="catalytic activity">
    <reaction>
        <text>(9Z,12Z)-octadecadienoate + O2 = (9S)-hydroperoxy-(10E,12Z)-octadecadienoate</text>
        <dbReference type="Rhea" id="RHEA:30291"/>
        <dbReference type="ChEBI" id="CHEBI:15379"/>
        <dbReference type="ChEBI" id="CHEBI:30245"/>
        <dbReference type="ChEBI" id="CHEBI:60955"/>
        <dbReference type="EC" id="1.13.11.58"/>
    </reaction>
</comment>
<comment type="cofactor">
    <cofactor evidence="3">
        <name>Fe cation</name>
        <dbReference type="ChEBI" id="CHEBI:24875"/>
    </cofactor>
    <text evidence="3">Binds 1 Fe cation per subunit. Iron is tightly bound.</text>
</comment>
<comment type="pathway">
    <text evidence="3">Lipid metabolism; oxylipin biosynthesis.</text>
</comment>
<comment type="subunit">
    <text evidence="1">Monomer.</text>
</comment>
<comment type="subcellular location">
    <subcellularLocation>
        <location evidence="3">Cytoplasm</location>
    </subcellularLocation>
</comment>
<comment type="tissue specificity">
    <text evidence="5">Expressed in tubers. Detected in sprouts and flowers. but not in leaves or stems.</text>
</comment>
<comment type="induction">
    <text evidence="5">Up-regulated by pathogen infection, and by jasmonate or arachidonate treatments. No induction by linoleic acid.</text>
</comment>
<comment type="similarity">
    <text evidence="6">Belongs to the lipoxygenase family.</text>
</comment>
<organism>
    <name type="scientific">Solanum tuberosum</name>
    <name type="common">Potato</name>
    <dbReference type="NCBI Taxonomy" id="4113"/>
    <lineage>
        <taxon>Eukaryota</taxon>
        <taxon>Viridiplantae</taxon>
        <taxon>Streptophyta</taxon>
        <taxon>Embryophyta</taxon>
        <taxon>Tracheophyta</taxon>
        <taxon>Spermatophyta</taxon>
        <taxon>Magnoliopsida</taxon>
        <taxon>eudicotyledons</taxon>
        <taxon>Gunneridae</taxon>
        <taxon>Pentapetalae</taxon>
        <taxon>asterids</taxon>
        <taxon>lamiids</taxon>
        <taxon>Solanales</taxon>
        <taxon>Solanaceae</taxon>
        <taxon>Solanoideae</taxon>
        <taxon>Solaneae</taxon>
        <taxon>Solanum</taxon>
    </lineage>
</organism>